<feature type="signal peptide" evidence="2">
    <location>
        <begin position="1"/>
        <end position="23"/>
    </location>
</feature>
<feature type="chain" id="PRO_0000429663" description="Endo-1,4-beta-xylanase">
    <location>
        <begin position="24"/>
        <end position="353"/>
    </location>
</feature>
<feature type="domain" description="GH10" evidence="3">
    <location>
        <begin position="50"/>
        <end position="330"/>
    </location>
</feature>
<feature type="active site" description="Proton donor" evidence="1">
    <location>
        <position position="161"/>
    </location>
</feature>
<feature type="active site" description="Nucleophile" evidence="4">
    <location>
        <position position="267"/>
    </location>
</feature>
<feature type="glycosylation site" description="N-linked (GlcNAc...) asparagine" evidence="2">
    <location>
        <position position="4"/>
    </location>
</feature>
<feature type="glycosylation site" description="N-linked (GlcNAc...) asparagine" evidence="2">
    <location>
        <position position="325"/>
    </location>
</feature>
<feature type="disulfide bond" evidence="1">
    <location>
        <begin position="285"/>
        <end position="291"/>
    </location>
</feature>
<feature type="sequence variant" description="In strain: A3969.2." evidence="5">
    <original>V</original>
    <variation>L</variation>
    <location>
        <position position="153"/>
    </location>
</feature>
<feature type="sequence variant" description="In strain: A3969.2." evidence="5">
    <original>S</original>
    <variation>T</variation>
    <location>
        <position position="274"/>
    </location>
</feature>
<comment type="function">
    <text evidence="5">Cold active endo-1,4-beta-xylanase involved in the hydrolysis of xylan, a major structural heterogeneous polysaccharide found in plant biomass representing the second most abundant polysaccharide in the biosphere, after cellulose.</text>
</comment>
<comment type="catalytic activity">
    <reaction evidence="5">
        <text>Endohydrolysis of (1-&gt;4)-beta-D-xylosidic linkages in xylans.</text>
        <dbReference type="EC" id="3.2.1.8"/>
    </reaction>
</comment>
<comment type="biophysicochemical properties">
    <phDependence>
        <text>Optimum pH is 5.5.</text>
    </phDependence>
    <temperatureDependence>
        <text>Optimum temperature is 15 degrees Celsius.</text>
    </temperatureDependence>
</comment>
<comment type="pathway">
    <text>Glycan degradation; xylan degradation.</text>
</comment>
<comment type="subcellular location">
    <subcellularLocation>
        <location evidence="5">Secreted</location>
    </subcellularLocation>
</comment>
<comment type="similarity">
    <text evidence="6">Belongs to the glycosyl hydrolase 10 (cellulase F) family.</text>
</comment>
<gene>
    <name type="primary">Xyn</name>
    <name type="synonym">xyl</name>
</gene>
<sequence>MIPNITQLKTAALVMLFAGQALSGPVESRQASESIDAKFKAHGKKYLGNIADQGTLNGNPKTPAIIKANFGQLSPENSMKWDATEPSQGQFSFAGSDYFVEFAETNGKLIRGHTLVWHSQLPSWVSSITDKTTLTDVMKNHITTVMKQYKGKVYAWDVVNEIFEEDGTLRDSVFSRVLGEDFVRIAFETAREADPEAKLYINDYNLDSATSAKLQGMVSHVKKWIAAGVPIDGIGSQTHLGAGAGAAASGALNALASAGTEEVAVTELDIAGASSTDYVDVVNACLDQPKCVGITVWGVADPDSWRADESPLLFDASYNPKEAYNVSQLLSRQHAFDLYLKLGNLLLSRLHSD</sequence>
<dbReference type="EC" id="3.2.1.8"/>
<dbReference type="EMBL" id="AY583585">
    <property type="protein sequence ID" value="AAS93681.1"/>
    <property type="molecule type" value="mRNA"/>
</dbReference>
<dbReference type="EMBL" id="DQ304546">
    <property type="protein sequence ID" value="ABC18330.1"/>
    <property type="molecule type" value="mRNA"/>
</dbReference>
<dbReference type="SMR" id="Q6PRW6"/>
<dbReference type="CAZy" id="GH10">
    <property type="family name" value="Glycoside Hydrolase Family 10"/>
</dbReference>
<dbReference type="GlyCosmos" id="Q6PRW6">
    <property type="glycosylation" value="2 sites, No reported glycans"/>
</dbReference>
<dbReference type="UniPathway" id="UPA00114"/>
<dbReference type="GO" id="GO:0005576">
    <property type="term" value="C:extracellular region"/>
    <property type="evidence" value="ECO:0007669"/>
    <property type="project" value="UniProtKB-SubCell"/>
</dbReference>
<dbReference type="GO" id="GO:0031176">
    <property type="term" value="F:endo-1,4-beta-xylanase activity"/>
    <property type="evidence" value="ECO:0007669"/>
    <property type="project" value="UniProtKB-EC"/>
</dbReference>
<dbReference type="GO" id="GO:0045493">
    <property type="term" value="P:xylan catabolic process"/>
    <property type="evidence" value="ECO:0007669"/>
    <property type="project" value="UniProtKB-UniPathway"/>
</dbReference>
<dbReference type="FunFam" id="3.20.20.80:FF:000094">
    <property type="entry name" value="Endo-1,4-beta-xylanase"/>
    <property type="match status" value="1"/>
</dbReference>
<dbReference type="Gene3D" id="3.20.20.80">
    <property type="entry name" value="Glycosidases"/>
    <property type="match status" value="1"/>
</dbReference>
<dbReference type="InterPro" id="IPR044846">
    <property type="entry name" value="GH10"/>
</dbReference>
<dbReference type="InterPro" id="IPR031158">
    <property type="entry name" value="GH10_AS"/>
</dbReference>
<dbReference type="InterPro" id="IPR001000">
    <property type="entry name" value="GH10_dom"/>
</dbReference>
<dbReference type="InterPro" id="IPR017853">
    <property type="entry name" value="Glycoside_hydrolase_SF"/>
</dbReference>
<dbReference type="PANTHER" id="PTHR31490:SF76">
    <property type="entry name" value="ENDO-1,4-BETA-XYLANASE C"/>
    <property type="match status" value="1"/>
</dbReference>
<dbReference type="PANTHER" id="PTHR31490">
    <property type="entry name" value="GLYCOSYL HYDROLASE"/>
    <property type="match status" value="1"/>
</dbReference>
<dbReference type="Pfam" id="PF00331">
    <property type="entry name" value="Glyco_hydro_10"/>
    <property type="match status" value="1"/>
</dbReference>
<dbReference type="PRINTS" id="PR00134">
    <property type="entry name" value="GLHYDRLASE10"/>
</dbReference>
<dbReference type="SMART" id="SM00633">
    <property type="entry name" value="Glyco_10"/>
    <property type="match status" value="1"/>
</dbReference>
<dbReference type="SUPFAM" id="SSF51445">
    <property type="entry name" value="(Trans)glycosidases"/>
    <property type="match status" value="1"/>
</dbReference>
<dbReference type="PROSITE" id="PS00591">
    <property type="entry name" value="GH10_1"/>
    <property type="match status" value="1"/>
</dbReference>
<dbReference type="PROSITE" id="PS51760">
    <property type="entry name" value="GH10_2"/>
    <property type="match status" value="1"/>
</dbReference>
<proteinExistence type="evidence at protein level"/>
<name>XYN_PENCH</name>
<organism>
    <name type="scientific">Penicillium chrysogenum</name>
    <name type="common">Penicillium notatum</name>
    <dbReference type="NCBI Taxonomy" id="5076"/>
    <lineage>
        <taxon>Eukaryota</taxon>
        <taxon>Fungi</taxon>
        <taxon>Dikarya</taxon>
        <taxon>Ascomycota</taxon>
        <taxon>Pezizomycotina</taxon>
        <taxon>Eurotiomycetes</taxon>
        <taxon>Eurotiomycetidae</taxon>
        <taxon>Eurotiales</taxon>
        <taxon>Aspergillaceae</taxon>
        <taxon>Penicillium</taxon>
        <taxon>Penicillium chrysogenum species complex</taxon>
    </lineage>
</organism>
<evidence type="ECO:0000250" key="1"/>
<evidence type="ECO:0000255" key="2"/>
<evidence type="ECO:0000255" key="3">
    <source>
        <dbReference type="PROSITE-ProRule" id="PRU01096"/>
    </source>
</evidence>
<evidence type="ECO:0000255" key="4">
    <source>
        <dbReference type="PROSITE-ProRule" id="PRU10061"/>
    </source>
</evidence>
<evidence type="ECO:0000269" key="5">
    <source>
    </source>
</evidence>
<evidence type="ECO:0000305" key="6"/>
<protein>
    <recommendedName>
        <fullName>Endo-1,4-beta-xylanase</fullName>
        <shortName>Xylanase</shortName>
        <ecNumber>3.2.1.8</ecNumber>
    </recommendedName>
    <alternativeName>
        <fullName>1,4-beta-D-xylan xylanohydrolase</fullName>
    </alternativeName>
</protein>
<accession>Q6PRW6</accession>
<accession>Q2PS23</accession>
<reference key="1">
    <citation type="journal article" date="2006" name="Acta Biochim. Biophys. Sin.">
        <title>Novel cold-adaptive Penicillium strain FS010 secreting thermo-labile xylanase isolated from Yellow Sea.</title>
        <authorList>
            <person name="Hou Y.H."/>
            <person name="Wang T.H."/>
            <person name="Long H."/>
            <person name="Zhu H.Y."/>
        </authorList>
    </citation>
    <scope>NUCLEOTIDE SEQUENCE [MRNA]</scope>
    <scope>VARIANTS LEU-153 AND THR-274</scope>
    <scope>SUBCELLULAR LOCATION</scope>
    <scope>FUNCTION</scope>
    <scope>CATALYTIC ACTIVITY</scope>
    <scope>BIOPHISICOCHEMICAL PROPERTIES</scope>
    <source>
        <strain>A3969.2</strain>
        <strain>FS010</strain>
    </source>
</reference>
<keyword id="KW-0119">Carbohydrate metabolism</keyword>
<keyword id="KW-1015">Disulfide bond</keyword>
<keyword id="KW-0325">Glycoprotein</keyword>
<keyword id="KW-0326">Glycosidase</keyword>
<keyword id="KW-0378">Hydrolase</keyword>
<keyword id="KW-0624">Polysaccharide degradation</keyword>
<keyword id="KW-0964">Secreted</keyword>
<keyword id="KW-0732">Signal</keyword>
<keyword id="KW-0858">Xylan degradation</keyword>